<gene>
    <name evidence="1" type="primary">nagK</name>
    <name type="ordered locus">SPAB_02298</name>
</gene>
<feature type="chain" id="PRO_1000085843" description="N-acetyl-D-glucosamine kinase">
    <location>
        <begin position="1"/>
        <end position="303"/>
    </location>
</feature>
<feature type="binding site" evidence="1">
    <location>
        <begin position="4"/>
        <end position="11"/>
    </location>
    <ligand>
        <name>ATP</name>
        <dbReference type="ChEBI" id="CHEBI:30616"/>
    </ligand>
</feature>
<feature type="binding site" evidence="1">
    <location>
        <begin position="133"/>
        <end position="140"/>
    </location>
    <ligand>
        <name>ATP</name>
        <dbReference type="ChEBI" id="CHEBI:30616"/>
    </ligand>
</feature>
<feature type="binding site" evidence="1">
    <location>
        <position position="157"/>
    </location>
    <ligand>
        <name>Zn(2+)</name>
        <dbReference type="ChEBI" id="CHEBI:29105"/>
    </ligand>
</feature>
<feature type="binding site" evidence="1">
    <location>
        <position position="177"/>
    </location>
    <ligand>
        <name>Zn(2+)</name>
        <dbReference type="ChEBI" id="CHEBI:29105"/>
    </ligand>
</feature>
<feature type="binding site" evidence="1">
    <location>
        <position position="179"/>
    </location>
    <ligand>
        <name>Zn(2+)</name>
        <dbReference type="ChEBI" id="CHEBI:29105"/>
    </ligand>
</feature>
<feature type="binding site" evidence="1">
    <location>
        <position position="184"/>
    </location>
    <ligand>
        <name>Zn(2+)</name>
        <dbReference type="ChEBI" id="CHEBI:29105"/>
    </ligand>
</feature>
<proteinExistence type="inferred from homology"/>
<accession>A9N4M6</accession>
<name>NAGK_SALPB</name>
<organism>
    <name type="scientific">Salmonella paratyphi B (strain ATCC BAA-1250 / SPB7)</name>
    <dbReference type="NCBI Taxonomy" id="1016998"/>
    <lineage>
        <taxon>Bacteria</taxon>
        <taxon>Pseudomonadati</taxon>
        <taxon>Pseudomonadota</taxon>
        <taxon>Gammaproteobacteria</taxon>
        <taxon>Enterobacterales</taxon>
        <taxon>Enterobacteriaceae</taxon>
        <taxon>Salmonella</taxon>
    </lineage>
</organism>
<comment type="function">
    <text evidence="1">Catalyzes the phosphorylation of N-acetyl-D-glucosamine (GlcNAc) derived from cell-wall degradation, yielding GlcNAc-6-P.</text>
</comment>
<comment type="catalytic activity">
    <reaction evidence="1">
        <text>N-acetyl-D-glucosamine + ATP = N-acetyl-D-glucosamine 6-phosphate + ADP + H(+)</text>
        <dbReference type="Rhea" id="RHEA:17417"/>
        <dbReference type="ChEBI" id="CHEBI:15378"/>
        <dbReference type="ChEBI" id="CHEBI:30616"/>
        <dbReference type="ChEBI" id="CHEBI:57513"/>
        <dbReference type="ChEBI" id="CHEBI:456216"/>
        <dbReference type="ChEBI" id="CHEBI:506227"/>
        <dbReference type="EC" id="2.7.1.59"/>
    </reaction>
</comment>
<comment type="pathway">
    <text evidence="1">Cell wall biogenesis; peptidoglycan recycling.</text>
</comment>
<comment type="similarity">
    <text evidence="1">Belongs to the ROK (NagC/XylR) family. NagK subfamily.</text>
</comment>
<reference key="1">
    <citation type="submission" date="2007-11" db="EMBL/GenBank/DDBJ databases">
        <authorList>
            <consortium name="The Salmonella enterica serovar Paratyphi B Genome Sequencing Project"/>
            <person name="McClelland M."/>
            <person name="Sanderson E.K."/>
            <person name="Porwollik S."/>
            <person name="Spieth J."/>
            <person name="Clifton W.S."/>
            <person name="Fulton R."/>
            <person name="Cordes M."/>
            <person name="Wollam A."/>
            <person name="Shah N."/>
            <person name="Pepin K."/>
            <person name="Bhonagiri V."/>
            <person name="Nash W."/>
            <person name="Johnson M."/>
            <person name="Thiruvilangam P."/>
            <person name="Wilson R."/>
        </authorList>
    </citation>
    <scope>NUCLEOTIDE SEQUENCE [LARGE SCALE GENOMIC DNA]</scope>
    <source>
        <strain>ATCC BAA-1250 / SPB7</strain>
    </source>
</reference>
<keyword id="KW-0067">ATP-binding</keyword>
<keyword id="KW-0119">Carbohydrate metabolism</keyword>
<keyword id="KW-0418">Kinase</keyword>
<keyword id="KW-0479">Metal-binding</keyword>
<keyword id="KW-0547">Nucleotide-binding</keyword>
<keyword id="KW-0808">Transferase</keyword>
<keyword id="KW-0862">Zinc</keyword>
<evidence type="ECO:0000255" key="1">
    <source>
        <dbReference type="HAMAP-Rule" id="MF_01271"/>
    </source>
</evidence>
<dbReference type="EC" id="2.7.1.59" evidence="1"/>
<dbReference type="EMBL" id="CP000886">
    <property type="protein sequence ID" value="ABX67681.1"/>
    <property type="molecule type" value="Genomic_DNA"/>
</dbReference>
<dbReference type="RefSeq" id="WP_000291332.1">
    <property type="nucleotide sequence ID" value="NC_010102.1"/>
</dbReference>
<dbReference type="SMR" id="A9N4M6"/>
<dbReference type="KEGG" id="spq:SPAB_02298"/>
<dbReference type="PATRIC" id="fig|1016998.12.peg.2173"/>
<dbReference type="HOGENOM" id="CLU_036604_0_3_6"/>
<dbReference type="BioCyc" id="SENT1016998:SPAB_RS09345-MONOMER"/>
<dbReference type="UniPathway" id="UPA00544"/>
<dbReference type="Proteomes" id="UP000008556">
    <property type="component" value="Chromosome"/>
</dbReference>
<dbReference type="GO" id="GO:0005524">
    <property type="term" value="F:ATP binding"/>
    <property type="evidence" value="ECO:0007669"/>
    <property type="project" value="UniProtKB-UniRule"/>
</dbReference>
<dbReference type="GO" id="GO:0045127">
    <property type="term" value="F:N-acetylglucosamine kinase activity"/>
    <property type="evidence" value="ECO:0007669"/>
    <property type="project" value="UniProtKB-UniRule"/>
</dbReference>
<dbReference type="GO" id="GO:0008270">
    <property type="term" value="F:zinc ion binding"/>
    <property type="evidence" value="ECO:0007669"/>
    <property type="project" value="UniProtKB-UniRule"/>
</dbReference>
<dbReference type="GO" id="GO:0006044">
    <property type="term" value="P:N-acetylglucosamine metabolic process"/>
    <property type="evidence" value="ECO:0007669"/>
    <property type="project" value="UniProtKB-UniRule"/>
</dbReference>
<dbReference type="GO" id="GO:0009254">
    <property type="term" value="P:peptidoglycan turnover"/>
    <property type="evidence" value="ECO:0007669"/>
    <property type="project" value="UniProtKB-UniRule"/>
</dbReference>
<dbReference type="CDD" id="cd24057">
    <property type="entry name" value="ASKHA_NBD_ROK_NAGK"/>
    <property type="match status" value="1"/>
</dbReference>
<dbReference type="FunFam" id="3.30.420.40:FF:000049">
    <property type="entry name" value="N-acetyl-D-glucosamine kinase"/>
    <property type="match status" value="1"/>
</dbReference>
<dbReference type="FunFam" id="3.30.420.40:FF:000051">
    <property type="entry name" value="N-acetyl-D-glucosamine kinase"/>
    <property type="match status" value="1"/>
</dbReference>
<dbReference type="Gene3D" id="3.30.420.40">
    <property type="match status" value="2"/>
</dbReference>
<dbReference type="HAMAP" id="MF_01271">
    <property type="entry name" value="GlcNAc_kinase"/>
    <property type="match status" value="1"/>
</dbReference>
<dbReference type="InterPro" id="IPR043129">
    <property type="entry name" value="ATPase_NBD"/>
</dbReference>
<dbReference type="InterPro" id="IPR023505">
    <property type="entry name" value="N-acetyl-D-glucosamine_kinase"/>
</dbReference>
<dbReference type="InterPro" id="IPR000600">
    <property type="entry name" value="ROK"/>
</dbReference>
<dbReference type="InterPro" id="IPR049874">
    <property type="entry name" value="ROK_cs"/>
</dbReference>
<dbReference type="NCBIfam" id="NF009835">
    <property type="entry name" value="PRK13310.1"/>
    <property type="match status" value="1"/>
</dbReference>
<dbReference type="PANTHER" id="PTHR18964:SF162">
    <property type="entry name" value="N-ACETYL-D-GLUCOSAMINE KINASE"/>
    <property type="match status" value="1"/>
</dbReference>
<dbReference type="PANTHER" id="PTHR18964">
    <property type="entry name" value="ROK (REPRESSOR, ORF, KINASE) FAMILY"/>
    <property type="match status" value="1"/>
</dbReference>
<dbReference type="Pfam" id="PF00480">
    <property type="entry name" value="ROK"/>
    <property type="match status" value="1"/>
</dbReference>
<dbReference type="SUPFAM" id="SSF53067">
    <property type="entry name" value="Actin-like ATPase domain"/>
    <property type="match status" value="1"/>
</dbReference>
<dbReference type="PROSITE" id="PS01125">
    <property type="entry name" value="ROK"/>
    <property type="match status" value="1"/>
</dbReference>
<protein>
    <recommendedName>
        <fullName evidence="1">N-acetyl-D-glucosamine kinase</fullName>
        <ecNumber evidence="1">2.7.1.59</ecNumber>
    </recommendedName>
    <alternativeName>
        <fullName evidence="1">GlcNAc kinase</fullName>
    </alternativeName>
</protein>
<sequence length="303" mass="32992">MYYGFDIGGTKIALGVFDSTRRLQWEKRVPTPHTSYSAFLDAVCELVAEADQRFGVKGSVGIGIPGMPETEDGTLYAANVPAASGKPLRADLSARLDRDVRLDNDANCFALSEAWDDEFTQYPLVMGLILGTGVGGGLVLNGKPITGQSYITGEFGHMRLPVDALTLMGFDFPLRRCGCGQMGCIENYLSGRGFAWLYQHYYDQSLQAPEIIALWEQGDEQAQAHVERYLNLLAVCLGNILTIVDPDLLVIGGGLSNFTAITTQLAERLPRHLLPVARAPRIERARHGDAGGMRGAAFLHLTD</sequence>